<comment type="function">
    <text evidence="1">Provides the rickettsial cell with host ATP in exchange for rickettsial ADP. This is an obligate exchange system. This energy acquiring activity is an important component of rickettsial parasitism (By similarity).</text>
</comment>
<comment type="subcellular location">
    <subcellularLocation>
        <location>Cell membrane</location>
        <topology>Multi-pass membrane protein</topology>
    </subcellularLocation>
</comment>
<comment type="similarity">
    <text evidence="3">Belongs to the ADP/ATP translocase tlc family.</text>
</comment>
<name>TLCA_RICCN</name>
<keyword id="KW-0067">ATP-binding</keyword>
<keyword id="KW-1003">Cell membrane</keyword>
<keyword id="KW-1015">Disulfide bond</keyword>
<keyword id="KW-0472">Membrane</keyword>
<keyword id="KW-0547">Nucleotide-binding</keyword>
<keyword id="KW-0812">Transmembrane</keyword>
<keyword id="KW-1133">Transmembrane helix</keyword>
<keyword id="KW-0813">Transport</keyword>
<feature type="chain" id="PRO_0000286466" description="ADP,ATP carrier protein 1">
    <location>
        <begin position="1"/>
        <end position="498"/>
    </location>
</feature>
<feature type="topological domain" description="Cytoplasmic" evidence="3">
    <location>
        <begin position="1"/>
        <end position="33"/>
    </location>
</feature>
<feature type="transmembrane region" description="Helical" evidence="3">
    <location>
        <begin position="34"/>
        <end position="54"/>
    </location>
</feature>
<feature type="topological domain" description="Extracellular" evidence="3">
    <location>
        <begin position="55"/>
        <end position="67"/>
    </location>
</feature>
<feature type="transmembrane region" description="Helical" evidence="3">
    <location>
        <begin position="68"/>
        <end position="88"/>
    </location>
</feature>
<feature type="topological domain" description="Cytoplasmic" evidence="3">
    <location>
        <begin position="89"/>
        <end position="92"/>
    </location>
</feature>
<feature type="transmembrane region" description="Helical" evidence="3">
    <location>
        <begin position="93"/>
        <end position="113"/>
    </location>
</feature>
<feature type="topological domain" description="Extracellular" evidence="3">
    <location>
        <begin position="114"/>
        <end position="147"/>
    </location>
</feature>
<feature type="transmembrane region" description="Helical" evidence="3">
    <location>
        <begin position="148"/>
        <end position="168"/>
    </location>
</feature>
<feature type="topological domain" description="Cytoplasmic" evidence="3">
    <location>
        <begin position="169"/>
        <end position="184"/>
    </location>
</feature>
<feature type="transmembrane region" description="Helical" evidence="3">
    <location>
        <begin position="185"/>
        <end position="205"/>
    </location>
</feature>
<feature type="topological domain" description="Extracellular" evidence="3">
    <location>
        <begin position="206"/>
        <end position="218"/>
    </location>
</feature>
<feature type="transmembrane region" description="Helical" evidence="3">
    <location>
        <begin position="219"/>
        <end position="239"/>
    </location>
</feature>
<feature type="topological domain" description="Cytoplasmic" evidence="3">
    <location>
        <begin position="240"/>
        <end position="279"/>
    </location>
</feature>
<feature type="transmembrane region" description="Helical" evidence="3">
    <location>
        <begin position="280"/>
        <end position="300"/>
    </location>
</feature>
<feature type="topological domain" description="Extracellular" evidence="3">
    <location>
        <begin position="301"/>
        <end position="320"/>
    </location>
</feature>
<feature type="transmembrane region" description="Helical" evidence="3">
    <location>
        <begin position="321"/>
        <end position="341"/>
    </location>
</feature>
<feature type="topological domain" description="Cytoplasmic" evidence="3">
    <location>
        <begin position="342"/>
        <end position="348"/>
    </location>
</feature>
<feature type="transmembrane region" description="Helical" evidence="3">
    <location>
        <begin position="349"/>
        <end position="369"/>
    </location>
</feature>
<feature type="topological domain" description="Extracellular" evidence="3">
    <location>
        <begin position="370"/>
        <end position="379"/>
    </location>
</feature>
<feature type="transmembrane region" description="Helical" evidence="3">
    <location>
        <begin position="380"/>
        <end position="400"/>
    </location>
</feature>
<feature type="topological domain" description="Cytoplasmic" evidence="3">
    <location>
        <begin position="401"/>
        <end position="438"/>
    </location>
</feature>
<feature type="transmembrane region" description="Helical" evidence="3">
    <location>
        <begin position="439"/>
        <end position="459"/>
    </location>
</feature>
<feature type="topological domain" description="Extracellular" evidence="3">
    <location>
        <begin position="460"/>
        <end position="465"/>
    </location>
</feature>
<feature type="transmembrane region" description="Helical" evidence="3">
    <location>
        <begin position="466"/>
        <end position="486"/>
    </location>
</feature>
<feature type="topological domain" description="Cytoplasmic" evidence="3">
    <location>
        <begin position="487"/>
        <end position="498"/>
    </location>
</feature>
<feature type="binding site" evidence="2">
    <location>
        <begin position="436"/>
        <end position="442"/>
    </location>
    <ligand>
        <name>ATP</name>
        <dbReference type="ChEBI" id="CHEBI:30616"/>
    </ligand>
</feature>
<feature type="disulfide bond" evidence="3">
    <location>
        <begin position="37"/>
        <end position="85"/>
    </location>
</feature>
<proteinExistence type="inferred from homology"/>
<evidence type="ECO:0000250" key="1"/>
<evidence type="ECO:0000255" key="2"/>
<evidence type="ECO:0000305" key="3"/>
<protein>
    <recommendedName>
        <fullName>ADP,ATP carrier protein 1</fullName>
    </recommendedName>
    <alternativeName>
        <fullName>ADP/ATP translocase 1</fullName>
    </alternativeName>
</protein>
<sequence length="498" mass="56662">MNNPKNDNYLSELSKVIWPIERYENKKFLPMAFMMFCILLNYSTLRSIKDGFVVTDIGAEAISFLKTYIVLPSAVIAMVIYVKLCDILKQENVFYVITSFFLGYFALFAFVLYPYPDLVHPDPETIESWSVAYPNVKWFIRIVGKWSFASFYTMAELWGTMMLSLLFWQFANQITKTDEAKRFYSMFGLLANLALPVTSVIIGYCLHEKTQIVAEHLKFVPLFVIMITSSFLVILTYRWMNKNVLTDPRLYDPALVKEKKAKAKMSLIDSFKMIFTSKYVGYIALLLIAYGVSVNLVEGVWKSKVKELYPTKEAYTIYMGKFQFYQGWVAIAFMLIGSNILRKVSWLTAAMITPLMMLITGAAFFAFIFFDSVIAMHLTGILASGPLALAVMIGMIQNVLSKGVKYSLFDATKNMAYIPLDKDLRVKGQAAVEVIGGRFGKSGGAIIQSTFFILFPAFGFVEATPYFASIFFVIVILWIYAVKGLNKEYKVLVNKTEK</sequence>
<reference key="1">
    <citation type="journal article" date="2001" name="Science">
        <title>Mechanisms of evolution in Rickettsia conorii and R. prowazekii.</title>
        <authorList>
            <person name="Ogata H."/>
            <person name="Audic S."/>
            <person name="Renesto-Audiffren P."/>
            <person name="Fournier P.-E."/>
            <person name="Barbe V."/>
            <person name="Samson D."/>
            <person name="Roux V."/>
            <person name="Cossart P."/>
            <person name="Weissenbach J."/>
            <person name="Claverie J.-M."/>
            <person name="Raoult D."/>
        </authorList>
    </citation>
    <scope>NUCLEOTIDE SEQUENCE [LARGE SCALE GENOMIC DNA]</scope>
    <source>
        <strain>ATCC VR-613 / Malish 7</strain>
    </source>
</reference>
<organism>
    <name type="scientific">Rickettsia conorii (strain ATCC VR-613 / Malish 7)</name>
    <dbReference type="NCBI Taxonomy" id="272944"/>
    <lineage>
        <taxon>Bacteria</taxon>
        <taxon>Pseudomonadati</taxon>
        <taxon>Pseudomonadota</taxon>
        <taxon>Alphaproteobacteria</taxon>
        <taxon>Rickettsiales</taxon>
        <taxon>Rickettsiaceae</taxon>
        <taxon>Rickettsieae</taxon>
        <taxon>Rickettsia</taxon>
        <taxon>spotted fever group</taxon>
    </lineage>
</organism>
<accession>Q92JI6</accession>
<dbReference type="EMBL" id="AE006914">
    <property type="protein sequence ID" value="AAL02619.1"/>
    <property type="molecule type" value="Genomic_DNA"/>
</dbReference>
<dbReference type="PIR" id="A97710">
    <property type="entry name" value="A97710"/>
</dbReference>
<dbReference type="RefSeq" id="WP_010976765.1">
    <property type="nucleotide sequence ID" value="NC_003103.1"/>
</dbReference>
<dbReference type="GeneID" id="928533"/>
<dbReference type="KEGG" id="rco:RC0081"/>
<dbReference type="PATRIC" id="fig|272944.4.peg.98"/>
<dbReference type="HOGENOM" id="CLU_023964_0_1_5"/>
<dbReference type="Proteomes" id="UP000000816">
    <property type="component" value="Chromosome"/>
</dbReference>
<dbReference type="GO" id="GO:0005886">
    <property type="term" value="C:plasma membrane"/>
    <property type="evidence" value="ECO:0007669"/>
    <property type="project" value="UniProtKB-SubCell"/>
</dbReference>
<dbReference type="GO" id="GO:0005524">
    <property type="term" value="F:ATP binding"/>
    <property type="evidence" value="ECO:0007669"/>
    <property type="project" value="UniProtKB-KW"/>
</dbReference>
<dbReference type="GO" id="GO:0005471">
    <property type="term" value="F:ATP:ADP antiporter activity"/>
    <property type="evidence" value="ECO:0007669"/>
    <property type="project" value="InterPro"/>
</dbReference>
<dbReference type="InterPro" id="IPR004667">
    <property type="entry name" value="ADP_ATP_car_bac_type"/>
</dbReference>
<dbReference type="InterPro" id="IPR036259">
    <property type="entry name" value="MFS_trans_sf"/>
</dbReference>
<dbReference type="NCBIfam" id="TIGR00769">
    <property type="entry name" value="AAA"/>
    <property type="match status" value="1"/>
</dbReference>
<dbReference type="PANTHER" id="PTHR31187">
    <property type="match status" value="1"/>
</dbReference>
<dbReference type="PANTHER" id="PTHR31187:SF1">
    <property type="entry name" value="ADP,ATP CARRIER PROTEIN 1"/>
    <property type="match status" value="1"/>
</dbReference>
<dbReference type="Pfam" id="PF03219">
    <property type="entry name" value="TLC"/>
    <property type="match status" value="1"/>
</dbReference>
<dbReference type="SUPFAM" id="SSF103473">
    <property type="entry name" value="MFS general substrate transporter"/>
    <property type="match status" value="1"/>
</dbReference>
<gene>
    <name type="primary">tlcA</name>
    <name type="synonym">tlc1</name>
    <name type="ordered locus">RC0081</name>
</gene>